<name>VGB_BORPE</name>
<gene>
    <name type="primary">vgb</name>
    <name type="ordered locus">BP0212</name>
</gene>
<dbReference type="EC" id="4.2.99.-"/>
<dbReference type="EMBL" id="BX640411">
    <property type="protein sequence ID" value="CAE40592.1"/>
    <property type="molecule type" value="Genomic_DNA"/>
</dbReference>
<dbReference type="RefSeq" id="NP_879100.1">
    <property type="nucleotide sequence ID" value="NC_002929.2"/>
</dbReference>
<dbReference type="RefSeq" id="WP_010929687.1">
    <property type="nucleotide sequence ID" value="NZ_CP039022.1"/>
</dbReference>
<dbReference type="SMR" id="Q7W0D3"/>
<dbReference type="STRING" id="257313.BP0212"/>
<dbReference type="PaxDb" id="257313-BP0212"/>
<dbReference type="KEGG" id="bpe:BP0212"/>
<dbReference type="PATRIC" id="fig|257313.5.peg.229"/>
<dbReference type="eggNOG" id="COG4257">
    <property type="taxonomic scope" value="Bacteria"/>
</dbReference>
<dbReference type="HOGENOM" id="CLU_054751_1_0_4"/>
<dbReference type="SABIO-RK" id="Q7W0D3"/>
<dbReference type="Proteomes" id="UP000002676">
    <property type="component" value="Chromosome"/>
</dbReference>
<dbReference type="GO" id="GO:0030288">
    <property type="term" value="C:outer membrane-bounded periplasmic space"/>
    <property type="evidence" value="ECO:0007669"/>
    <property type="project" value="TreeGrafter"/>
</dbReference>
<dbReference type="GO" id="GO:0016835">
    <property type="term" value="F:carbon-oxygen lyase activity"/>
    <property type="evidence" value="ECO:0007669"/>
    <property type="project" value="UniProtKB-UniRule"/>
</dbReference>
<dbReference type="GO" id="GO:0000287">
    <property type="term" value="F:magnesium ion binding"/>
    <property type="evidence" value="ECO:0007669"/>
    <property type="project" value="InterPro"/>
</dbReference>
<dbReference type="GO" id="GO:0017001">
    <property type="term" value="P:antibiotic catabolic process"/>
    <property type="evidence" value="ECO:0007669"/>
    <property type="project" value="UniProtKB-UniRule"/>
</dbReference>
<dbReference type="GO" id="GO:0046677">
    <property type="term" value="P:response to antibiotic"/>
    <property type="evidence" value="ECO:0007669"/>
    <property type="project" value="UniProtKB-KW"/>
</dbReference>
<dbReference type="Gene3D" id="2.130.10.10">
    <property type="entry name" value="YVTN repeat-like/Quinoprotein amine dehydrogenase"/>
    <property type="match status" value="1"/>
</dbReference>
<dbReference type="HAMAP" id="MF_01282">
    <property type="entry name" value="VirginiamycinB_lyase"/>
    <property type="match status" value="1"/>
</dbReference>
<dbReference type="InterPro" id="IPR011217">
    <property type="entry name" value="Streptogrm_lyase"/>
</dbReference>
<dbReference type="InterPro" id="IPR051344">
    <property type="entry name" value="Vgb"/>
</dbReference>
<dbReference type="InterPro" id="IPR015943">
    <property type="entry name" value="WD40/YVTN_repeat-like_dom_sf"/>
</dbReference>
<dbReference type="PANTHER" id="PTHR40274">
    <property type="entry name" value="VIRGINIAMYCIN B LYASE"/>
    <property type="match status" value="1"/>
</dbReference>
<dbReference type="PANTHER" id="PTHR40274:SF3">
    <property type="entry name" value="VIRGINIAMYCIN B LYASE"/>
    <property type="match status" value="1"/>
</dbReference>
<dbReference type="Pfam" id="PF24684">
    <property type="entry name" value="Vgb_lyase"/>
    <property type="match status" value="1"/>
</dbReference>
<dbReference type="PIRSF" id="PIRSF026412">
    <property type="entry name" value="Streptogrm_lyase"/>
    <property type="match status" value="1"/>
</dbReference>
<dbReference type="SUPFAM" id="SSF63829">
    <property type="entry name" value="Calcium-dependent phosphotriesterase"/>
    <property type="match status" value="1"/>
</dbReference>
<keyword id="KW-0046">Antibiotic resistance</keyword>
<keyword id="KW-0456">Lyase</keyword>
<keyword id="KW-0460">Magnesium</keyword>
<keyword id="KW-0479">Metal-binding</keyword>
<keyword id="KW-1185">Reference proteome</keyword>
<proteinExistence type="evidence at protein level"/>
<accession>Q7W0D3</accession>
<feature type="chain" id="PRO_0000313770" description="Virginiamycin B lyase">
    <location>
        <begin position="1"/>
        <end position="299"/>
    </location>
</feature>
<feature type="active site" description="Proton acceptor" evidence="1">
    <location>
        <position position="271"/>
    </location>
</feature>
<feature type="binding site" evidence="1">
    <location>
        <position position="229"/>
    </location>
    <ligand>
        <name>substrate</name>
    </ligand>
</feature>
<feature type="binding site" evidence="1">
    <location>
        <position position="269"/>
    </location>
    <ligand>
        <name>Mg(2+)</name>
        <dbReference type="ChEBI" id="CHEBI:18420"/>
    </ligand>
</feature>
<feature type="binding site" evidence="1">
    <location>
        <position position="286"/>
    </location>
    <ligand>
        <name>Mg(2+)</name>
        <dbReference type="ChEBI" id="CHEBI:18420"/>
    </ligand>
</feature>
<comment type="function">
    <text evidence="2">Inactivates the type B streptogramin antibiotics by linearizing the lactone ring at the ester linkage, generating a free phenylglycine carboxylate and converting the threonyl moiety into 2-amino-butenoic acid.</text>
</comment>
<comment type="cofactor">
    <cofactor evidence="1">
        <name>Mg(2+)</name>
        <dbReference type="ChEBI" id="CHEBI:18420"/>
    </cofactor>
</comment>
<comment type="biophysicochemical properties">
    <kinetics>
        <KM evidence="2">31 uM for quinupristin</KM>
    </kinetics>
</comment>
<comment type="subunit">
    <text evidence="1">Monomer.</text>
</comment>
<comment type="similarity">
    <text evidence="3">Belongs to the Vgb family.</text>
</comment>
<evidence type="ECO:0000250" key="1"/>
<evidence type="ECO:0000269" key="2">
    <source>
    </source>
</evidence>
<evidence type="ECO:0000305" key="3"/>
<protein>
    <recommendedName>
        <fullName>Virginiamycin B lyase</fullName>
        <ecNumber>4.2.99.-</ecNumber>
    </recommendedName>
    <alternativeName>
        <fullName>Streptogramin B lyase</fullName>
    </alternativeName>
</protein>
<reference key="1">
    <citation type="journal article" date="2003" name="Nat. Genet.">
        <title>Comparative analysis of the genome sequences of Bordetella pertussis, Bordetella parapertussis and Bordetella bronchiseptica.</title>
        <authorList>
            <person name="Parkhill J."/>
            <person name="Sebaihia M."/>
            <person name="Preston A."/>
            <person name="Murphy L.D."/>
            <person name="Thomson N.R."/>
            <person name="Harris D.E."/>
            <person name="Holden M.T.G."/>
            <person name="Churcher C.M."/>
            <person name="Bentley S.D."/>
            <person name="Mungall K.L."/>
            <person name="Cerdeno-Tarraga A.-M."/>
            <person name="Temple L."/>
            <person name="James K.D."/>
            <person name="Harris B."/>
            <person name="Quail M.A."/>
            <person name="Achtman M."/>
            <person name="Atkin R."/>
            <person name="Baker S."/>
            <person name="Basham D."/>
            <person name="Bason N."/>
            <person name="Cherevach I."/>
            <person name="Chillingworth T."/>
            <person name="Collins M."/>
            <person name="Cronin A."/>
            <person name="Davis P."/>
            <person name="Doggett J."/>
            <person name="Feltwell T."/>
            <person name="Goble A."/>
            <person name="Hamlin N."/>
            <person name="Hauser H."/>
            <person name="Holroyd S."/>
            <person name="Jagels K."/>
            <person name="Leather S."/>
            <person name="Moule S."/>
            <person name="Norberczak H."/>
            <person name="O'Neil S."/>
            <person name="Ormond D."/>
            <person name="Price C."/>
            <person name="Rabbinowitsch E."/>
            <person name="Rutter S."/>
            <person name="Sanders M."/>
            <person name="Saunders D."/>
            <person name="Seeger K."/>
            <person name="Sharp S."/>
            <person name="Simmonds M."/>
            <person name="Skelton J."/>
            <person name="Squares R."/>
            <person name="Squares S."/>
            <person name="Stevens K."/>
            <person name="Unwin L."/>
            <person name="Whitehead S."/>
            <person name="Barrell B.G."/>
            <person name="Maskell D.J."/>
        </authorList>
    </citation>
    <scope>NUCLEOTIDE SEQUENCE [LARGE SCALE GENOMIC DNA]</scope>
    <source>
        <strain>Tohama I / ATCC BAA-589 / NCTC 13251</strain>
    </source>
</reference>
<reference key="2">
    <citation type="journal article" date="2001" name="Biochemistry">
        <title>Vgb from Staphylococcus aureus inactivates streptogramin B antibiotics by an elimination mechanism not hydrolysis.</title>
        <authorList>
            <person name="Mukhtar T.A."/>
            <person name="Koteva K.P."/>
            <person name="Hughes D.W."/>
            <person name="Wright G.D."/>
        </authorList>
    </citation>
    <scope>FUNCTION</scope>
    <scope>BIOPHYSICOCHEMICAL PROPERTIES</scope>
</reference>
<sequence length="299" mass="31143">MNQVEMTEFPVGKPEEALYGVASTPDGALWFTLAKGNAIGRLSPDGEVSRFPLPHADGQPTTITCGPDGRPWFTLSSANAVGRLSPDGALRMFELPRPASRPFGIAAGHDGCLWFAEMAGDRIGRITIDGDIEEYDLPVKGGYPSCMAAGRDGLMWFTLNQAGAIGSISATAAPRIFPLGAADAAPVGIASDAQGALWIAQAGNGAIARFDAGGRITEFPLHSRAARPHALAADAAGNLWFTEWGANRIGRISEAGDTAGYELAAPGSEPHGIAIDPHGCVWAALETGSLVRLQASPRD</sequence>
<organism>
    <name type="scientific">Bordetella pertussis (strain Tohama I / ATCC BAA-589 / NCTC 13251)</name>
    <dbReference type="NCBI Taxonomy" id="257313"/>
    <lineage>
        <taxon>Bacteria</taxon>
        <taxon>Pseudomonadati</taxon>
        <taxon>Pseudomonadota</taxon>
        <taxon>Betaproteobacteria</taxon>
        <taxon>Burkholderiales</taxon>
        <taxon>Alcaligenaceae</taxon>
        <taxon>Bordetella</taxon>
    </lineage>
</organism>